<sequence>MSKEDSFEMEGTVVDTLPNTMFRVELENGHVVTAHISGKMRKNYIRILTGDKVRVELTPYDLSKGRITYRAR</sequence>
<comment type="function">
    <text evidence="1">One of the essential components for the initiation of protein synthesis. Stabilizes the binding of IF-2 and IF-3 on the 30S subunit to which N-formylmethionyl-tRNA(fMet) subsequently binds. Helps modulate mRNA selection, yielding the 30S pre-initiation complex (PIC). Upon addition of the 50S ribosomal subunit IF-1, IF-2 and IF-3 are released leaving the mature 70S translation initiation complex.</text>
</comment>
<comment type="subunit">
    <text evidence="1">Component of the 30S ribosomal translation pre-initiation complex which assembles on the 30S ribosome in the order IF-2 and IF-3, IF-1 and N-formylmethionyl-tRNA(fMet); mRNA recruitment can occur at any time during PIC assembly.</text>
</comment>
<comment type="subcellular location">
    <subcellularLocation>
        <location evidence="1">Cytoplasm</location>
    </subcellularLocation>
</comment>
<comment type="similarity">
    <text evidence="1">Belongs to the IF-1 family.</text>
</comment>
<protein>
    <recommendedName>
        <fullName evidence="1">Translation initiation factor IF-1</fullName>
    </recommendedName>
</protein>
<evidence type="ECO:0000255" key="1">
    <source>
        <dbReference type="HAMAP-Rule" id="MF_00075"/>
    </source>
</evidence>
<name>IF1_STUS1</name>
<keyword id="KW-0963">Cytoplasm</keyword>
<keyword id="KW-0396">Initiation factor</keyword>
<keyword id="KW-0648">Protein biosynthesis</keyword>
<keyword id="KW-1185">Reference proteome</keyword>
<keyword id="KW-0694">RNA-binding</keyword>
<keyword id="KW-0699">rRNA-binding</keyword>
<proteinExistence type="inferred from homology"/>
<gene>
    <name evidence="1" type="primary">infA</name>
    <name type="ordered locus">PST_2297</name>
</gene>
<dbReference type="EMBL" id="CP000304">
    <property type="protein sequence ID" value="ABP79956.1"/>
    <property type="molecule type" value="Genomic_DNA"/>
</dbReference>
<dbReference type="RefSeq" id="WP_002553999.1">
    <property type="nucleotide sequence ID" value="NC_009434.1"/>
</dbReference>
<dbReference type="SMR" id="A4VLV5"/>
<dbReference type="GeneID" id="98638452"/>
<dbReference type="KEGG" id="psa:PST_2297"/>
<dbReference type="eggNOG" id="COG0361">
    <property type="taxonomic scope" value="Bacteria"/>
</dbReference>
<dbReference type="HOGENOM" id="CLU_151267_1_0_6"/>
<dbReference type="Proteomes" id="UP000000233">
    <property type="component" value="Chromosome"/>
</dbReference>
<dbReference type="GO" id="GO:0005829">
    <property type="term" value="C:cytosol"/>
    <property type="evidence" value="ECO:0007669"/>
    <property type="project" value="TreeGrafter"/>
</dbReference>
<dbReference type="GO" id="GO:0043022">
    <property type="term" value="F:ribosome binding"/>
    <property type="evidence" value="ECO:0007669"/>
    <property type="project" value="UniProtKB-UniRule"/>
</dbReference>
<dbReference type="GO" id="GO:0019843">
    <property type="term" value="F:rRNA binding"/>
    <property type="evidence" value="ECO:0007669"/>
    <property type="project" value="UniProtKB-UniRule"/>
</dbReference>
<dbReference type="GO" id="GO:0003743">
    <property type="term" value="F:translation initiation factor activity"/>
    <property type="evidence" value="ECO:0007669"/>
    <property type="project" value="UniProtKB-UniRule"/>
</dbReference>
<dbReference type="CDD" id="cd04451">
    <property type="entry name" value="S1_IF1"/>
    <property type="match status" value="1"/>
</dbReference>
<dbReference type="FunFam" id="2.40.50.140:FF:000002">
    <property type="entry name" value="Translation initiation factor IF-1"/>
    <property type="match status" value="1"/>
</dbReference>
<dbReference type="Gene3D" id="2.40.50.140">
    <property type="entry name" value="Nucleic acid-binding proteins"/>
    <property type="match status" value="1"/>
</dbReference>
<dbReference type="HAMAP" id="MF_00075">
    <property type="entry name" value="IF_1"/>
    <property type="match status" value="1"/>
</dbReference>
<dbReference type="InterPro" id="IPR012340">
    <property type="entry name" value="NA-bd_OB-fold"/>
</dbReference>
<dbReference type="InterPro" id="IPR006196">
    <property type="entry name" value="RNA-binding_domain_S1_IF1"/>
</dbReference>
<dbReference type="InterPro" id="IPR003029">
    <property type="entry name" value="S1_domain"/>
</dbReference>
<dbReference type="InterPro" id="IPR004368">
    <property type="entry name" value="TIF_IF1"/>
</dbReference>
<dbReference type="NCBIfam" id="TIGR00008">
    <property type="entry name" value="infA"/>
    <property type="match status" value="1"/>
</dbReference>
<dbReference type="PANTHER" id="PTHR33370">
    <property type="entry name" value="TRANSLATION INITIATION FACTOR IF-1, CHLOROPLASTIC"/>
    <property type="match status" value="1"/>
</dbReference>
<dbReference type="PANTHER" id="PTHR33370:SF1">
    <property type="entry name" value="TRANSLATION INITIATION FACTOR IF-1, CHLOROPLASTIC"/>
    <property type="match status" value="1"/>
</dbReference>
<dbReference type="Pfam" id="PF01176">
    <property type="entry name" value="eIF-1a"/>
    <property type="match status" value="1"/>
</dbReference>
<dbReference type="SMART" id="SM00316">
    <property type="entry name" value="S1"/>
    <property type="match status" value="1"/>
</dbReference>
<dbReference type="SUPFAM" id="SSF50249">
    <property type="entry name" value="Nucleic acid-binding proteins"/>
    <property type="match status" value="1"/>
</dbReference>
<dbReference type="PROSITE" id="PS50832">
    <property type="entry name" value="S1_IF1_TYPE"/>
    <property type="match status" value="1"/>
</dbReference>
<organism>
    <name type="scientific">Stutzerimonas stutzeri (strain A1501)</name>
    <name type="common">Pseudomonas stutzeri</name>
    <dbReference type="NCBI Taxonomy" id="379731"/>
    <lineage>
        <taxon>Bacteria</taxon>
        <taxon>Pseudomonadati</taxon>
        <taxon>Pseudomonadota</taxon>
        <taxon>Gammaproteobacteria</taxon>
        <taxon>Pseudomonadales</taxon>
        <taxon>Pseudomonadaceae</taxon>
        <taxon>Stutzerimonas</taxon>
    </lineage>
</organism>
<accession>A4VLV5</accession>
<reference key="1">
    <citation type="journal article" date="2008" name="Proc. Natl. Acad. Sci. U.S.A.">
        <title>Nitrogen fixation island and rhizosphere competence traits in the genome of root-associated Pseudomonas stutzeri A1501.</title>
        <authorList>
            <person name="Yan Y."/>
            <person name="Yang J."/>
            <person name="Dou Y."/>
            <person name="Chen M."/>
            <person name="Ping S."/>
            <person name="Peng J."/>
            <person name="Lu W."/>
            <person name="Zhang W."/>
            <person name="Yao Z."/>
            <person name="Li H."/>
            <person name="Liu W."/>
            <person name="He S."/>
            <person name="Geng L."/>
            <person name="Zhang X."/>
            <person name="Yang F."/>
            <person name="Yu H."/>
            <person name="Zhan Y."/>
            <person name="Li D."/>
            <person name="Lin Z."/>
            <person name="Wang Y."/>
            <person name="Elmerich C."/>
            <person name="Lin M."/>
            <person name="Jin Q."/>
        </authorList>
    </citation>
    <scope>NUCLEOTIDE SEQUENCE [LARGE SCALE GENOMIC DNA]</scope>
    <source>
        <strain>A1501</strain>
    </source>
</reference>
<feature type="chain" id="PRO_0000338893" description="Translation initiation factor IF-1">
    <location>
        <begin position="1"/>
        <end position="72"/>
    </location>
</feature>
<feature type="domain" description="S1-like" evidence="1">
    <location>
        <begin position="1"/>
        <end position="72"/>
    </location>
</feature>